<accession>Q48P39</accession>
<reference key="1">
    <citation type="journal article" date="2005" name="J. Bacteriol.">
        <title>Whole-genome sequence analysis of Pseudomonas syringae pv. phaseolicola 1448A reveals divergence among pathovars in genes involved in virulence and transposition.</title>
        <authorList>
            <person name="Joardar V."/>
            <person name="Lindeberg M."/>
            <person name="Jackson R.W."/>
            <person name="Selengut J."/>
            <person name="Dodson R."/>
            <person name="Brinkac L.M."/>
            <person name="Daugherty S.C."/>
            <person name="DeBoy R.T."/>
            <person name="Durkin A.S."/>
            <person name="Gwinn Giglio M."/>
            <person name="Madupu R."/>
            <person name="Nelson W.C."/>
            <person name="Rosovitz M.J."/>
            <person name="Sullivan S.A."/>
            <person name="Crabtree J."/>
            <person name="Creasy T."/>
            <person name="Davidsen T.M."/>
            <person name="Haft D.H."/>
            <person name="Zafar N."/>
            <person name="Zhou L."/>
            <person name="Halpin R."/>
            <person name="Holley T."/>
            <person name="Khouri H.M."/>
            <person name="Feldblyum T.V."/>
            <person name="White O."/>
            <person name="Fraser C.M."/>
            <person name="Chatterjee A.K."/>
            <person name="Cartinhour S."/>
            <person name="Schneider D."/>
            <person name="Mansfield J.W."/>
            <person name="Collmer A."/>
            <person name="Buell R."/>
        </authorList>
    </citation>
    <scope>NUCLEOTIDE SEQUENCE [LARGE SCALE GENOMIC DNA]</scope>
    <source>
        <strain>1448A / Race 6</strain>
    </source>
</reference>
<sequence>MKLSMPRFDQAPVLVVGDVMLDRYWHGGTSRISPEAPVPVVKVDQIEDRPGGAANVALNIAALGAPASLVGVTGDDEAAESLANSLKAAGVLARFQRIANQPTIVKLRVISRHQQLLRIDFEEAFNTDPLALSAEVYSLLDGIKVLVLSDYGKGALRNHQALIQAARKRGIPVLADPKGKDFTIYRGASLITPNLSEFEAIVGHCEDEAQLVTKGAQLMQELDLGALLVTRGEHGMTLLRPDQQALHLPARAREVFDVTGAGDTVISTLAAAIAAGEELPHAVALANLAAGIVVGKLGTAAISAPELRRAIQREEGSERGVLGLEQLLLAVDDARAHKEKIVFTNGCFDILHAGHVTYLEQARALGDRLIVAVNDDASVSRLKGPGRPINSVDRRMAVLAGLGAVDWVISFPEGTPENLLSHVKPDVLVKGGDYGVDQVVGADIVQAYGGDVRVLGLVENSSTTAIVEKIRGQG</sequence>
<gene>
    <name evidence="1" type="primary">hldE</name>
    <name type="ordered locus">PSPPH_0528</name>
</gene>
<proteinExistence type="inferred from homology"/>
<comment type="function">
    <text evidence="1">Catalyzes the phosphorylation of D-glycero-D-manno-heptose 7-phosphate at the C-1 position to selectively form D-glycero-beta-D-manno-heptose-1,7-bisphosphate.</text>
</comment>
<comment type="function">
    <text evidence="1">Catalyzes the ADP transfer from ATP to D-glycero-beta-D-manno-heptose 1-phosphate, yielding ADP-D-glycero-beta-D-manno-heptose.</text>
</comment>
<comment type="catalytic activity">
    <reaction evidence="1">
        <text>D-glycero-beta-D-manno-heptose 7-phosphate + ATP = D-glycero-beta-D-manno-heptose 1,7-bisphosphate + ADP + H(+)</text>
        <dbReference type="Rhea" id="RHEA:27473"/>
        <dbReference type="ChEBI" id="CHEBI:15378"/>
        <dbReference type="ChEBI" id="CHEBI:30616"/>
        <dbReference type="ChEBI" id="CHEBI:60204"/>
        <dbReference type="ChEBI" id="CHEBI:60208"/>
        <dbReference type="ChEBI" id="CHEBI:456216"/>
        <dbReference type="EC" id="2.7.1.167"/>
    </reaction>
</comment>
<comment type="catalytic activity">
    <reaction evidence="1">
        <text>D-glycero-beta-D-manno-heptose 1-phosphate + ATP + H(+) = ADP-D-glycero-beta-D-manno-heptose + diphosphate</text>
        <dbReference type="Rhea" id="RHEA:27465"/>
        <dbReference type="ChEBI" id="CHEBI:15378"/>
        <dbReference type="ChEBI" id="CHEBI:30616"/>
        <dbReference type="ChEBI" id="CHEBI:33019"/>
        <dbReference type="ChEBI" id="CHEBI:59967"/>
        <dbReference type="ChEBI" id="CHEBI:61593"/>
        <dbReference type="EC" id="2.7.7.70"/>
    </reaction>
</comment>
<comment type="pathway">
    <text evidence="1">Nucleotide-sugar biosynthesis; ADP-L-glycero-beta-D-manno-heptose biosynthesis; ADP-L-glycero-beta-D-manno-heptose from D-glycero-beta-D-manno-heptose 7-phosphate: step 1/4.</text>
</comment>
<comment type="pathway">
    <text evidence="1">Nucleotide-sugar biosynthesis; ADP-L-glycero-beta-D-manno-heptose biosynthesis; ADP-L-glycero-beta-D-manno-heptose from D-glycero-beta-D-manno-heptose 7-phosphate: step 3/4.</text>
</comment>
<comment type="subunit">
    <text evidence="1">Homodimer.</text>
</comment>
<comment type="similarity">
    <text evidence="1">In the N-terminal section; belongs to the carbohydrate kinase PfkB family.</text>
</comment>
<comment type="similarity">
    <text evidence="1">In the C-terminal section; belongs to the cytidylyltransferase family.</text>
</comment>
<feature type="chain" id="PRO_0000255775" description="Bifunctional protein HldE">
    <location>
        <begin position="1"/>
        <end position="474"/>
    </location>
</feature>
<feature type="region of interest" description="Ribokinase">
    <location>
        <begin position="1"/>
        <end position="318"/>
    </location>
</feature>
<feature type="region of interest" description="Cytidylyltransferase">
    <location>
        <begin position="343"/>
        <end position="474"/>
    </location>
</feature>
<feature type="active site" evidence="1">
    <location>
        <position position="263"/>
    </location>
</feature>
<feature type="binding site" evidence="1">
    <location>
        <begin position="194"/>
        <end position="197"/>
    </location>
    <ligand>
        <name>ATP</name>
        <dbReference type="ChEBI" id="CHEBI:30616"/>
    </ligand>
</feature>
<evidence type="ECO:0000255" key="1">
    <source>
        <dbReference type="HAMAP-Rule" id="MF_01603"/>
    </source>
</evidence>
<keyword id="KW-0067">ATP-binding</keyword>
<keyword id="KW-0119">Carbohydrate metabolism</keyword>
<keyword id="KW-0418">Kinase</keyword>
<keyword id="KW-0511">Multifunctional enzyme</keyword>
<keyword id="KW-0547">Nucleotide-binding</keyword>
<keyword id="KW-0548">Nucleotidyltransferase</keyword>
<keyword id="KW-0808">Transferase</keyword>
<organism>
    <name type="scientific">Pseudomonas savastanoi pv. phaseolicola (strain 1448A / Race 6)</name>
    <name type="common">Pseudomonas syringae pv. phaseolicola (strain 1448A / Race 6)</name>
    <dbReference type="NCBI Taxonomy" id="264730"/>
    <lineage>
        <taxon>Bacteria</taxon>
        <taxon>Pseudomonadati</taxon>
        <taxon>Pseudomonadota</taxon>
        <taxon>Gammaproteobacteria</taxon>
        <taxon>Pseudomonadales</taxon>
        <taxon>Pseudomonadaceae</taxon>
        <taxon>Pseudomonas</taxon>
    </lineage>
</organism>
<name>HLDE_PSE14</name>
<dbReference type="EC" id="2.7.1.167" evidence="1"/>
<dbReference type="EC" id="2.7.7.70" evidence="1"/>
<dbReference type="EMBL" id="CP000058">
    <property type="protein sequence ID" value="AAZ35956.1"/>
    <property type="molecule type" value="Genomic_DNA"/>
</dbReference>
<dbReference type="RefSeq" id="WP_011167538.1">
    <property type="nucleotide sequence ID" value="NC_005773.3"/>
</dbReference>
<dbReference type="SMR" id="Q48P39"/>
<dbReference type="KEGG" id="psp:PSPPH_0528"/>
<dbReference type="eggNOG" id="COG0615">
    <property type="taxonomic scope" value="Bacteria"/>
</dbReference>
<dbReference type="eggNOG" id="COG2870">
    <property type="taxonomic scope" value="Bacteria"/>
</dbReference>
<dbReference type="HOGENOM" id="CLU_021150_2_1_6"/>
<dbReference type="UniPathway" id="UPA00356">
    <property type="reaction ID" value="UER00437"/>
</dbReference>
<dbReference type="UniPathway" id="UPA00356">
    <property type="reaction ID" value="UER00439"/>
</dbReference>
<dbReference type="Proteomes" id="UP000000551">
    <property type="component" value="Chromosome"/>
</dbReference>
<dbReference type="GO" id="GO:0005829">
    <property type="term" value="C:cytosol"/>
    <property type="evidence" value="ECO:0007669"/>
    <property type="project" value="TreeGrafter"/>
</dbReference>
<dbReference type="GO" id="GO:0005524">
    <property type="term" value="F:ATP binding"/>
    <property type="evidence" value="ECO:0007669"/>
    <property type="project" value="UniProtKB-UniRule"/>
</dbReference>
<dbReference type="GO" id="GO:0033785">
    <property type="term" value="F:heptose 7-phosphate kinase activity"/>
    <property type="evidence" value="ECO:0007669"/>
    <property type="project" value="UniProtKB-UniRule"/>
</dbReference>
<dbReference type="GO" id="GO:0033786">
    <property type="term" value="F:heptose-1-phosphate adenylyltransferase activity"/>
    <property type="evidence" value="ECO:0007669"/>
    <property type="project" value="UniProtKB-UniRule"/>
</dbReference>
<dbReference type="GO" id="GO:0016773">
    <property type="term" value="F:phosphotransferase activity, alcohol group as acceptor"/>
    <property type="evidence" value="ECO:0007669"/>
    <property type="project" value="InterPro"/>
</dbReference>
<dbReference type="GO" id="GO:0097171">
    <property type="term" value="P:ADP-L-glycero-beta-D-manno-heptose biosynthetic process"/>
    <property type="evidence" value="ECO:0007669"/>
    <property type="project" value="UniProtKB-UniPathway"/>
</dbReference>
<dbReference type="CDD" id="cd01172">
    <property type="entry name" value="RfaE_like"/>
    <property type="match status" value="1"/>
</dbReference>
<dbReference type="FunFam" id="3.40.1190.20:FF:000002">
    <property type="entry name" value="Bifunctional protein HldE"/>
    <property type="match status" value="1"/>
</dbReference>
<dbReference type="FunFam" id="3.40.50.620:FF:000028">
    <property type="entry name" value="Bifunctional protein HldE"/>
    <property type="match status" value="1"/>
</dbReference>
<dbReference type="Gene3D" id="3.40.1190.20">
    <property type="match status" value="1"/>
</dbReference>
<dbReference type="Gene3D" id="3.40.50.620">
    <property type="entry name" value="HUPs"/>
    <property type="match status" value="1"/>
</dbReference>
<dbReference type="HAMAP" id="MF_01603">
    <property type="entry name" value="HldE"/>
    <property type="match status" value="1"/>
</dbReference>
<dbReference type="InterPro" id="IPR023030">
    <property type="entry name" value="Bifunc_HldE"/>
</dbReference>
<dbReference type="InterPro" id="IPR002173">
    <property type="entry name" value="Carboh/pur_kinase_PfkB_CS"/>
</dbReference>
<dbReference type="InterPro" id="IPR004821">
    <property type="entry name" value="Cyt_trans-like"/>
</dbReference>
<dbReference type="InterPro" id="IPR011611">
    <property type="entry name" value="PfkB_dom"/>
</dbReference>
<dbReference type="InterPro" id="IPR011913">
    <property type="entry name" value="RfaE_dom_I"/>
</dbReference>
<dbReference type="InterPro" id="IPR011914">
    <property type="entry name" value="RfaE_dom_II"/>
</dbReference>
<dbReference type="InterPro" id="IPR029056">
    <property type="entry name" value="Ribokinase-like"/>
</dbReference>
<dbReference type="InterPro" id="IPR014729">
    <property type="entry name" value="Rossmann-like_a/b/a_fold"/>
</dbReference>
<dbReference type="NCBIfam" id="TIGR00125">
    <property type="entry name" value="cyt_tran_rel"/>
    <property type="match status" value="1"/>
</dbReference>
<dbReference type="NCBIfam" id="NF008454">
    <property type="entry name" value="PRK11316.1"/>
    <property type="match status" value="1"/>
</dbReference>
<dbReference type="NCBIfam" id="TIGR02198">
    <property type="entry name" value="rfaE_dom_I"/>
    <property type="match status" value="1"/>
</dbReference>
<dbReference type="NCBIfam" id="TIGR02199">
    <property type="entry name" value="rfaE_dom_II"/>
    <property type="match status" value="1"/>
</dbReference>
<dbReference type="PANTHER" id="PTHR46969">
    <property type="entry name" value="BIFUNCTIONAL PROTEIN HLDE"/>
    <property type="match status" value="1"/>
</dbReference>
<dbReference type="PANTHER" id="PTHR46969:SF1">
    <property type="entry name" value="BIFUNCTIONAL PROTEIN HLDE"/>
    <property type="match status" value="1"/>
</dbReference>
<dbReference type="Pfam" id="PF01467">
    <property type="entry name" value="CTP_transf_like"/>
    <property type="match status" value="1"/>
</dbReference>
<dbReference type="Pfam" id="PF00294">
    <property type="entry name" value="PfkB"/>
    <property type="match status" value="1"/>
</dbReference>
<dbReference type="SUPFAM" id="SSF52374">
    <property type="entry name" value="Nucleotidylyl transferase"/>
    <property type="match status" value="1"/>
</dbReference>
<dbReference type="SUPFAM" id="SSF53613">
    <property type="entry name" value="Ribokinase-like"/>
    <property type="match status" value="1"/>
</dbReference>
<dbReference type="PROSITE" id="PS00583">
    <property type="entry name" value="PFKB_KINASES_1"/>
    <property type="match status" value="1"/>
</dbReference>
<protein>
    <recommendedName>
        <fullName evidence="1">Bifunctional protein HldE</fullName>
    </recommendedName>
    <domain>
        <recommendedName>
            <fullName evidence="1">D-beta-D-heptose 7-phosphate kinase</fullName>
            <ecNumber evidence="1">2.7.1.167</ecNumber>
        </recommendedName>
        <alternativeName>
            <fullName evidence="1">D-beta-D-heptose 7-phosphotransferase</fullName>
        </alternativeName>
        <alternativeName>
            <fullName evidence="1">D-glycero-beta-D-manno-heptose-7-phosphate kinase</fullName>
        </alternativeName>
    </domain>
    <domain>
        <recommendedName>
            <fullName evidence="1">D-beta-D-heptose 1-phosphate adenylyltransferase</fullName>
            <ecNumber evidence="1">2.7.7.70</ecNumber>
        </recommendedName>
        <alternativeName>
            <fullName evidence="1">D-glycero-beta-D-manno-heptose 1-phosphate adenylyltransferase</fullName>
        </alternativeName>
    </domain>
</protein>